<feature type="chain" id="PRO_0000144803" description="V-type proton ATPase subunit F">
    <location>
        <begin position="1"/>
        <end position="127"/>
    </location>
</feature>
<feature type="sequence conflict" description="In Ref. 1; CAA93819." evidence="3" ref="1">
    <original>D</original>
    <variation>H</variation>
    <location>
        <position position="17"/>
    </location>
</feature>
<feature type="sequence conflict" description="In Ref. 1; CAA93819." evidence="3" ref="1">
    <original>L</original>
    <variation>V</variation>
    <location>
        <position position="69"/>
    </location>
</feature>
<feature type="sequence conflict" description="In Ref. 1; CAA93819." evidence="3" ref="1">
    <original>VL</original>
    <variation>DV</variation>
    <location>
        <begin position="92"/>
        <end position="93"/>
    </location>
</feature>
<organism>
    <name type="scientific">Anopheles gambiae</name>
    <name type="common">African malaria mosquito</name>
    <dbReference type="NCBI Taxonomy" id="7165"/>
    <lineage>
        <taxon>Eukaryota</taxon>
        <taxon>Metazoa</taxon>
        <taxon>Ecdysozoa</taxon>
        <taxon>Arthropoda</taxon>
        <taxon>Hexapoda</taxon>
        <taxon>Insecta</taxon>
        <taxon>Pterygota</taxon>
        <taxon>Neoptera</taxon>
        <taxon>Endopterygota</taxon>
        <taxon>Diptera</taxon>
        <taxon>Nematocera</taxon>
        <taxon>Culicoidea</taxon>
        <taxon>Culicidae</taxon>
        <taxon>Anophelinae</taxon>
        <taxon>Anopheles</taxon>
    </lineage>
</organism>
<dbReference type="EMBL" id="Z69979">
    <property type="protein sequence ID" value="CAA93819.1"/>
    <property type="molecule type" value="mRNA"/>
</dbReference>
<dbReference type="EMBL" id="AAAB01008859">
    <property type="protein sequence ID" value="EAA08191.2"/>
    <property type="molecule type" value="Genomic_DNA"/>
</dbReference>
<dbReference type="SMR" id="Q17029"/>
<dbReference type="FunCoup" id="Q17029">
    <property type="interactions" value="1464"/>
</dbReference>
<dbReference type="STRING" id="7165.Q17029"/>
<dbReference type="PaxDb" id="7165-AGAP002473-PA"/>
<dbReference type="EnsemblMetazoa" id="AGAP002473-RA">
    <property type="protein sequence ID" value="AGAP002473-PA"/>
    <property type="gene ID" value="AGAP002473"/>
</dbReference>
<dbReference type="GeneID" id="1273486"/>
<dbReference type="KEGG" id="aga:1273486"/>
<dbReference type="CTD" id="36731"/>
<dbReference type="VEuPathDB" id="VectorBase:AGAMI1_006032"/>
<dbReference type="VEuPathDB" id="VectorBase:AGAP002473"/>
<dbReference type="eggNOG" id="KOG3432">
    <property type="taxonomic scope" value="Eukaryota"/>
</dbReference>
<dbReference type="HOGENOM" id="CLU_135754_0_0_1"/>
<dbReference type="InParanoid" id="Q17029"/>
<dbReference type="OMA" id="IIICQHI"/>
<dbReference type="PhylomeDB" id="Q17029"/>
<dbReference type="Proteomes" id="UP000007062">
    <property type="component" value="Chromosome 2R"/>
</dbReference>
<dbReference type="GO" id="GO:0016020">
    <property type="term" value="C:membrane"/>
    <property type="evidence" value="ECO:0000318"/>
    <property type="project" value="GO_Central"/>
</dbReference>
<dbReference type="GO" id="GO:0033180">
    <property type="term" value="C:proton-transporting V-type ATPase, V1 domain"/>
    <property type="evidence" value="ECO:0007669"/>
    <property type="project" value="InterPro"/>
</dbReference>
<dbReference type="GO" id="GO:0046961">
    <property type="term" value="F:proton-transporting ATPase activity, rotational mechanism"/>
    <property type="evidence" value="ECO:0007669"/>
    <property type="project" value="InterPro"/>
</dbReference>
<dbReference type="FunFam" id="3.40.50.10580:FF:000001">
    <property type="entry name" value="V-type proton ATPase subunit F"/>
    <property type="match status" value="1"/>
</dbReference>
<dbReference type="Gene3D" id="3.40.50.10580">
    <property type="entry name" value="ATPase, V1 complex, subunit F"/>
    <property type="match status" value="1"/>
</dbReference>
<dbReference type="InterPro" id="IPR008218">
    <property type="entry name" value="ATPase_V1-cplx_f_g_su"/>
</dbReference>
<dbReference type="InterPro" id="IPR005772">
    <property type="entry name" value="ATPase_V1-cplx_fsu_euk"/>
</dbReference>
<dbReference type="InterPro" id="IPR036906">
    <property type="entry name" value="ATPase_V1_fsu_sf"/>
</dbReference>
<dbReference type="NCBIfam" id="TIGR01101">
    <property type="entry name" value="V_ATP_synt_F"/>
    <property type="match status" value="1"/>
</dbReference>
<dbReference type="PANTHER" id="PTHR13861:SF2">
    <property type="entry name" value="V-TYPE PROTON ATPASE SUBUNIT F"/>
    <property type="match status" value="1"/>
</dbReference>
<dbReference type="PANTHER" id="PTHR13861">
    <property type="entry name" value="VACUOLAR ATP SYNTHASE SUBUNIT F"/>
    <property type="match status" value="1"/>
</dbReference>
<dbReference type="Pfam" id="PF01990">
    <property type="entry name" value="ATP-synt_F"/>
    <property type="match status" value="1"/>
</dbReference>
<dbReference type="PIRSF" id="PIRSF015945">
    <property type="entry name" value="ATPase_V1_F_euk"/>
    <property type="match status" value="1"/>
</dbReference>
<dbReference type="SUPFAM" id="SSF159468">
    <property type="entry name" value="AtpF-like"/>
    <property type="match status" value="1"/>
</dbReference>
<name>VATF_ANOGA</name>
<proteinExistence type="evidence at transcript level"/>
<reference key="1">
    <citation type="journal article" date="1996" name="Proc. Natl. Acad. Sci. U.S.A.">
        <title>Identification and characterization of differentially expressed cDNAs of the vector mosquito, Anopheles gambiae.</title>
        <authorList>
            <person name="Dimopoulos G.M."/>
            <person name="Richman A.M."/>
            <person name="della Torre A."/>
            <person name="Kafatos F.C."/>
            <person name="Louis C."/>
        </authorList>
    </citation>
    <scope>NUCLEOTIDE SEQUENCE [MRNA]</scope>
    <source>
        <strain>G3</strain>
        <tissue>Midgut</tissue>
    </source>
</reference>
<reference key="2">
    <citation type="journal article" date="2002" name="Science">
        <title>The genome sequence of the malaria mosquito Anopheles gambiae.</title>
        <authorList>
            <person name="Holt R.A."/>
            <person name="Subramanian G.M."/>
            <person name="Halpern A."/>
            <person name="Sutton G.G."/>
            <person name="Charlab R."/>
            <person name="Nusskern D.R."/>
            <person name="Wincker P."/>
            <person name="Clark A.G."/>
            <person name="Ribeiro J.M.C."/>
            <person name="Wides R."/>
            <person name="Salzberg S.L."/>
            <person name="Loftus B.J."/>
            <person name="Yandell M.D."/>
            <person name="Majoros W.H."/>
            <person name="Rusch D.B."/>
            <person name="Lai Z."/>
            <person name="Kraft C.L."/>
            <person name="Abril J.F."/>
            <person name="Anthouard V."/>
            <person name="Arensburger P."/>
            <person name="Atkinson P.W."/>
            <person name="Baden H."/>
            <person name="de Berardinis V."/>
            <person name="Baldwin D."/>
            <person name="Benes V."/>
            <person name="Biedler J."/>
            <person name="Blass C."/>
            <person name="Bolanos R."/>
            <person name="Boscus D."/>
            <person name="Barnstead M."/>
            <person name="Cai S."/>
            <person name="Center A."/>
            <person name="Chaturverdi K."/>
            <person name="Christophides G.K."/>
            <person name="Chrystal M.A.M."/>
            <person name="Clamp M."/>
            <person name="Cravchik A."/>
            <person name="Curwen V."/>
            <person name="Dana A."/>
            <person name="Delcher A."/>
            <person name="Dew I."/>
            <person name="Evans C.A."/>
            <person name="Flanigan M."/>
            <person name="Grundschober-Freimoser A."/>
            <person name="Friedli L."/>
            <person name="Gu Z."/>
            <person name="Guan P."/>
            <person name="Guigo R."/>
            <person name="Hillenmeyer M.E."/>
            <person name="Hladun S.L."/>
            <person name="Hogan J.R."/>
            <person name="Hong Y.S."/>
            <person name="Hoover J."/>
            <person name="Jaillon O."/>
            <person name="Ke Z."/>
            <person name="Kodira C.D."/>
            <person name="Kokoza E."/>
            <person name="Koutsos A."/>
            <person name="Letunic I."/>
            <person name="Levitsky A.A."/>
            <person name="Liang Y."/>
            <person name="Lin J.-J."/>
            <person name="Lobo N.F."/>
            <person name="Lopez J.R."/>
            <person name="Malek J.A."/>
            <person name="McIntosh T.C."/>
            <person name="Meister S."/>
            <person name="Miller J.R."/>
            <person name="Mobarry C."/>
            <person name="Mongin E."/>
            <person name="Murphy S.D."/>
            <person name="O'Brochta D.A."/>
            <person name="Pfannkoch C."/>
            <person name="Qi R."/>
            <person name="Regier M.A."/>
            <person name="Remington K."/>
            <person name="Shao H."/>
            <person name="Sharakhova M.V."/>
            <person name="Sitter C.D."/>
            <person name="Shetty J."/>
            <person name="Smith T.J."/>
            <person name="Strong R."/>
            <person name="Sun J."/>
            <person name="Thomasova D."/>
            <person name="Ton L.Q."/>
            <person name="Topalis P."/>
            <person name="Tu Z.J."/>
            <person name="Unger M.F."/>
            <person name="Walenz B."/>
            <person name="Wang A.H."/>
            <person name="Wang J."/>
            <person name="Wang M."/>
            <person name="Wang X."/>
            <person name="Woodford K.J."/>
            <person name="Wortman J.R."/>
            <person name="Wu M."/>
            <person name="Yao A."/>
            <person name="Zdobnov E.M."/>
            <person name="Zhang H."/>
            <person name="Zhao Q."/>
            <person name="Zhao S."/>
            <person name="Zhu S.C."/>
            <person name="Zhimulev I."/>
            <person name="Coluzzi M."/>
            <person name="della Torre A."/>
            <person name="Roth C.W."/>
            <person name="Louis C."/>
            <person name="Kalush F."/>
            <person name="Mural R.J."/>
            <person name="Myers E.W."/>
            <person name="Adams M.D."/>
            <person name="Smith H.O."/>
            <person name="Broder S."/>
            <person name="Gardner M.J."/>
            <person name="Fraser C.M."/>
            <person name="Birney E."/>
            <person name="Bork P."/>
            <person name="Brey P.T."/>
            <person name="Venter J.C."/>
            <person name="Weissenbach J."/>
            <person name="Kafatos F.C."/>
            <person name="Collins F.H."/>
            <person name="Hoffman S.L."/>
        </authorList>
    </citation>
    <scope>NUCLEOTIDE SEQUENCE [LARGE SCALE GENOMIC DNA]</scope>
    <source>
        <strain>PEST</strain>
    </source>
</reference>
<gene>
    <name type="primary">Vha14</name>
    <name type="ORF">AGAP002473</name>
</gene>
<sequence>MALLSAMKGKLISVIGDEDTCVGFLLGGVGEINKNRHPNFMVVDKNTAVSEIEDCFKRFIKRDDIDIILINQNYAELIRHVIDSHTAPTPAVLEIPSKDHPYDASKDSILRRAKGMFNPEDMIANRG</sequence>
<evidence type="ECO:0000250" key="1">
    <source>
        <dbReference type="UniProtKB" id="Q16864"/>
    </source>
</evidence>
<evidence type="ECO:0000250" key="2">
    <source>
        <dbReference type="UniProtKB" id="Q28029"/>
    </source>
</evidence>
<evidence type="ECO:0000305" key="3"/>
<accession>Q17029</accession>
<accession>Q7QC67</accession>
<protein>
    <recommendedName>
        <fullName>V-type proton ATPase subunit F</fullName>
        <shortName>V-ATPase subunit F</shortName>
    </recommendedName>
    <alternativeName>
        <fullName>V-ATPase 14 kDa subunit</fullName>
    </alternativeName>
    <alternativeName>
        <fullName>Vacuolar proton pump subunit F</fullName>
    </alternativeName>
</protein>
<comment type="function">
    <text evidence="1 2">Subunit of the V1 complex of vacuolar(H+)-ATPase (V-ATPase), a multisubunit enzyme composed of a peripheral complex (V1) that hydrolyzes ATP and a membrane integral complex (V0) that translocates protons (By similarity). V-ATPase is responsible for acidifying and maintaining the pH of intracellular compartments and in some cell types, is targeted to the plasma membrane, where it is responsible for acidifying the extracellular environment (By similarity).</text>
</comment>
<comment type="subunit">
    <text evidence="1">V-ATPase is a heteromultimeric enzyme made up of two complexes: the ATP-hydrolytic V1 complex and the proton translocation V0 complex (By similarity). The V1 complex consists of three catalytic AB heterodimers that form a heterohexamer, three peripheral stalks each consisting of EG heterodimers, one central rotor including subunits D and F, and the regulatory subunits C and H (By similarity). The proton translocation complex V0 consists of the proton transport subunit a, a ring of proteolipid subunits c9c'', rotary subunit d, subunits e and f, and the accessory subunits VhaAC45 and ATP6AP2 (By similarity).</text>
</comment>
<comment type="similarity">
    <text evidence="3">Belongs to the V-ATPase F subunit family.</text>
</comment>
<keyword id="KW-0375">Hydrogen ion transport</keyword>
<keyword id="KW-0406">Ion transport</keyword>
<keyword id="KW-1185">Reference proteome</keyword>
<keyword id="KW-0813">Transport</keyword>